<sequence>MKLNELMPSEGSRTNRKRIGRGTSSGTGKTAGRGQKGQKARGKVRLGFEGGQMPLYRRIPKRGFTNINRKEFAIVNLDALNVFDEGAEVTPESLLKAGIISKQLSGVKVLGNGEITKKLTVKANKFSESAVKAIEAAGGKTEVI</sequence>
<name>RL15_PEDPA</name>
<organism>
    <name type="scientific">Pediococcus pentosaceus (strain ATCC 25745 / CCUG 21536 / LMG 10740 / 183-1w)</name>
    <dbReference type="NCBI Taxonomy" id="278197"/>
    <lineage>
        <taxon>Bacteria</taxon>
        <taxon>Bacillati</taxon>
        <taxon>Bacillota</taxon>
        <taxon>Bacilli</taxon>
        <taxon>Lactobacillales</taxon>
        <taxon>Lactobacillaceae</taxon>
        <taxon>Pediococcus</taxon>
    </lineage>
</organism>
<feature type="chain" id="PRO_1000054508" description="Large ribosomal subunit protein uL15">
    <location>
        <begin position="1"/>
        <end position="144"/>
    </location>
</feature>
<feature type="region of interest" description="Disordered" evidence="2">
    <location>
        <begin position="1"/>
        <end position="44"/>
    </location>
</feature>
<feature type="compositionally biased region" description="Gly residues" evidence="2">
    <location>
        <begin position="23"/>
        <end position="35"/>
    </location>
</feature>
<reference key="1">
    <citation type="journal article" date="2006" name="Proc. Natl. Acad. Sci. U.S.A.">
        <title>Comparative genomics of the lactic acid bacteria.</title>
        <authorList>
            <person name="Makarova K.S."/>
            <person name="Slesarev A."/>
            <person name="Wolf Y.I."/>
            <person name="Sorokin A."/>
            <person name="Mirkin B."/>
            <person name="Koonin E.V."/>
            <person name="Pavlov A."/>
            <person name="Pavlova N."/>
            <person name="Karamychev V."/>
            <person name="Polouchine N."/>
            <person name="Shakhova V."/>
            <person name="Grigoriev I."/>
            <person name="Lou Y."/>
            <person name="Rohksar D."/>
            <person name="Lucas S."/>
            <person name="Huang K."/>
            <person name="Goodstein D.M."/>
            <person name="Hawkins T."/>
            <person name="Plengvidhya V."/>
            <person name="Welker D."/>
            <person name="Hughes J."/>
            <person name="Goh Y."/>
            <person name="Benson A."/>
            <person name="Baldwin K."/>
            <person name="Lee J.-H."/>
            <person name="Diaz-Muniz I."/>
            <person name="Dosti B."/>
            <person name="Smeianov V."/>
            <person name="Wechter W."/>
            <person name="Barabote R."/>
            <person name="Lorca G."/>
            <person name="Altermann E."/>
            <person name="Barrangou R."/>
            <person name="Ganesan B."/>
            <person name="Xie Y."/>
            <person name="Rawsthorne H."/>
            <person name="Tamir D."/>
            <person name="Parker C."/>
            <person name="Breidt F."/>
            <person name="Broadbent J.R."/>
            <person name="Hutkins R."/>
            <person name="O'Sullivan D."/>
            <person name="Steele J."/>
            <person name="Unlu G."/>
            <person name="Saier M.H. Jr."/>
            <person name="Klaenhammer T."/>
            <person name="Richardson P."/>
            <person name="Kozyavkin S."/>
            <person name="Weimer B.C."/>
            <person name="Mills D.A."/>
        </authorList>
    </citation>
    <scope>NUCLEOTIDE SEQUENCE [LARGE SCALE GENOMIC DNA]</scope>
    <source>
        <strain>ATCC 25745 / CCUG 21536 / LMG 10740 / 183-1w</strain>
    </source>
</reference>
<accession>Q03ED5</accession>
<dbReference type="EMBL" id="CP000422">
    <property type="protein sequence ID" value="ABJ68437.1"/>
    <property type="molecule type" value="Genomic_DNA"/>
</dbReference>
<dbReference type="RefSeq" id="WP_002833346.1">
    <property type="nucleotide sequence ID" value="NC_008525.1"/>
</dbReference>
<dbReference type="SMR" id="Q03ED5"/>
<dbReference type="STRING" id="278197.PEPE_1399"/>
<dbReference type="GeneID" id="33062519"/>
<dbReference type="KEGG" id="ppe:PEPE_1399"/>
<dbReference type="eggNOG" id="COG0200">
    <property type="taxonomic scope" value="Bacteria"/>
</dbReference>
<dbReference type="HOGENOM" id="CLU_055188_4_2_9"/>
<dbReference type="OrthoDB" id="9810293at2"/>
<dbReference type="Proteomes" id="UP000000773">
    <property type="component" value="Chromosome"/>
</dbReference>
<dbReference type="GO" id="GO:0022625">
    <property type="term" value="C:cytosolic large ribosomal subunit"/>
    <property type="evidence" value="ECO:0007669"/>
    <property type="project" value="TreeGrafter"/>
</dbReference>
<dbReference type="GO" id="GO:0019843">
    <property type="term" value="F:rRNA binding"/>
    <property type="evidence" value="ECO:0007669"/>
    <property type="project" value="UniProtKB-UniRule"/>
</dbReference>
<dbReference type="GO" id="GO:0003735">
    <property type="term" value="F:structural constituent of ribosome"/>
    <property type="evidence" value="ECO:0007669"/>
    <property type="project" value="InterPro"/>
</dbReference>
<dbReference type="GO" id="GO:0006412">
    <property type="term" value="P:translation"/>
    <property type="evidence" value="ECO:0007669"/>
    <property type="project" value="UniProtKB-UniRule"/>
</dbReference>
<dbReference type="Gene3D" id="3.100.10.10">
    <property type="match status" value="1"/>
</dbReference>
<dbReference type="HAMAP" id="MF_01341">
    <property type="entry name" value="Ribosomal_uL15"/>
    <property type="match status" value="1"/>
</dbReference>
<dbReference type="InterPro" id="IPR030878">
    <property type="entry name" value="Ribosomal_uL15"/>
</dbReference>
<dbReference type="InterPro" id="IPR021131">
    <property type="entry name" value="Ribosomal_uL15/eL18"/>
</dbReference>
<dbReference type="InterPro" id="IPR036227">
    <property type="entry name" value="Ribosomal_uL15/eL18_sf"/>
</dbReference>
<dbReference type="InterPro" id="IPR005749">
    <property type="entry name" value="Ribosomal_uL15_bac-type"/>
</dbReference>
<dbReference type="InterPro" id="IPR001196">
    <property type="entry name" value="Ribosomal_uL15_CS"/>
</dbReference>
<dbReference type="NCBIfam" id="TIGR01071">
    <property type="entry name" value="rplO_bact"/>
    <property type="match status" value="1"/>
</dbReference>
<dbReference type="PANTHER" id="PTHR12934">
    <property type="entry name" value="50S RIBOSOMAL PROTEIN L15"/>
    <property type="match status" value="1"/>
</dbReference>
<dbReference type="PANTHER" id="PTHR12934:SF11">
    <property type="entry name" value="LARGE RIBOSOMAL SUBUNIT PROTEIN UL15M"/>
    <property type="match status" value="1"/>
</dbReference>
<dbReference type="Pfam" id="PF00828">
    <property type="entry name" value="Ribosomal_L27A"/>
    <property type="match status" value="1"/>
</dbReference>
<dbReference type="SUPFAM" id="SSF52080">
    <property type="entry name" value="Ribosomal proteins L15p and L18e"/>
    <property type="match status" value="1"/>
</dbReference>
<dbReference type="PROSITE" id="PS00475">
    <property type="entry name" value="RIBOSOMAL_L15"/>
    <property type="match status" value="1"/>
</dbReference>
<keyword id="KW-0687">Ribonucleoprotein</keyword>
<keyword id="KW-0689">Ribosomal protein</keyword>
<keyword id="KW-0694">RNA-binding</keyword>
<keyword id="KW-0699">rRNA-binding</keyword>
<gene>
    <name evidence="1" type="primary">rplO</name>
    <name type="ordered locus">PEPE_1399</name>
</gene>
<comment type="function">
    <text evidence="1">Binds to the 23S rRNA.</text>
</comment>
<comment type="subunit">
    <text evidence="1">Part of the 50S ribosomal subunit.</text>
</comment>
<comment type="similarity">
    <text evidence="1">Belongs to the universal ribosomal protein uL15 family.</text>
</comment>
<proteinExistence type="inferred from homology"/>
<protein>
    <recommendedName>
        <fullName evidence="1">Large ribosomal subunit protein uL15</fullName>
    </recommendedName>
    <alternativeName>
        <fullName evidence="3">50S ribosomal protein L15</fullName>
    </alternativeName>
</protein>
<evidence type="ECO:0000255" key="1">
    <source>
        <dbReference type="HAMAP-Rule" id="MF_01341"/>
    </source>
</evidence>
<evidence type="ECO:0000256" key="2">
    <source>
        <dbReference type="SAM" id="MobiDB-lite"/>
    </source>
</evidence>
<evidence type="ECO:0000305" key="3"/>